<accession>B4EAX2</accession>
<keyword id="KW-0067">ATP-binding</keyword>
<keyword id="KW-0963">Cytoplasm</keyword>
<keyword id="KW-0418">Kinase</keyword>
<keyword id="KW-0460">Magnesium</keyword>
<keyword id="KW-0479">Metal-binding</keyword>
<keyword id="KW-0546">Nucleotide metabolism</keyword>
<keyword id="KW-0547">Nucleotide-binding</keyword>
<keyword id="KW-0597">Phosphoprotein</keyword>
<keyword id="KW-0808">Transferase</keyword>
<name>NDK_BURCJ</name>
<proteinExistence type="inferred from homology"/>
<evidence type="ECO:0000255" key="1">
    <source>
        <dbReference type="HAMAP-Rule" id="MF_00451"/>
    </source>
</evidence>
<protein>
    <recommendedName>
        <fullName evidence="1">Nucleoside diphosphate kinase</fullName>
        <shortName evidence="1">NDK</shortName>
        <shortName evidence="1">NDP kinase</shortName>
        <ecNumber evidence="1">2.7.4.6</ecNumber>
    </recommendedName>
    <alternativeName>
        <fullName evidence="1">Nucleoside-2-P kinase</fullName>
    </alternativeName>
</protein>
<reference key="1">
    <citation type="journal article" date="2009" name="J. Bacteriol.">
        <title>The genome of Burkholderia cenocepacia J2315, an epidemic pathogen of cystic fibrosis patients.</title>
        <authorList>
            <person name="Holden M.T."/>
            <person name="Seth-Smith H.M."/>
            <person name="Crossman L.C."/>
            <person name="Sebaihia M."/>
            <person name="Bentley S.D."/>
            <person name="Cerdeno-Tarraga A.M."/>
            <person name="Thomson N.R."/>
            <person name="Bason N."/>
            <person name="Quail M.A."/>
            <person name="Sharp S."/>
            <person name="Cherevach I."/>
            <person name="Churcher C."/>
            <person name="Goodhead I."/>
            <person name="Hauser H."/>
            <person name="Holroyd N."/>
            <person name="Mungall K."/>
            <person name="Scott P."/>
            <person name="Walker D."/>
            <person name="White B."/>
            <person name="Rose H."/>
            <person name="Iversen P."/>
            <person name="Mil-Homens D."/>
            <person name="Rocha E.P."/>
            <person name="Fialho A.M."/>
            <person name="Baldwin A."/>
            <person name="Dowson C."/>
            <person name="Barrell B.G."/>
            <person name="Govan J.R."/>
            <person name="Vandamme P."/>
            <person name="Hart C.A."/>
            <person name="Mahenthiralingam E."/>
            <person name="Parkhill J."/>
        </authorList>
    </citation>
    <scope>NUCLEOTIDE SEQUENCE [LARGE SCALE GENOMIC DNA]</scope>
    <source>
        <strain>ATCC BAA-245 / DSM 16553 / LMG 16656 / NCTC 13227 / J2315 / CF5610</strain>
    </source>
</reference>
<comment type="function">
    <text evidence="1">Major role in the synthesis of nucleoside triphosphates other than ATP. The ATP gamma phosphate is transferred to the NDP beta phosphate via a ping-pong mechanism, using a phosphorylated active-site intermediate.</text>
</comment>
<comment type="catalytic activity">
    <reaction evidence="1">
        <text>a 2'-deoxyribonucleoside 5'-diphosphate + ATP = a 2'-deoxyribonucleoside 5'-triphosphate + ADP</text>
        <dbReference type="Rhea" id="RHEA:44640"/>
        <dbReference type="ChEBI" id="CHEBI:30616"/>
        <dbReference type="ChEBI" id="CHEBI:61560"/>
        <dbReference type="ChEBI" id="CHEBI:73316"/>
        <dbReference type="ChEBI" id="CHEBI:456216"/>
        <dbReference type="EC" id="2.7.4.6"/>
    </reaction>
</comment>
<comment type="catalytic activity">
    <reaction evidence="1">
        <text>a ribonucleoside 5'-diphosphate + ATP = a ribonucleoside 5'-triphosphate + ADP</text>
        <dbReference type="Rhea" id="RHEA:18113"/>
        <dbReference type="ChEBI" id="CHEBI:30616"/>
        <dbReference type="ChEBI" id="CHEBI:57930"/>
        <dbReference type="ChEBI" id="CHEBI:61557"/>
        <dbReference type="ChEBI" id="CHEBI:456216"/>
        <dbReference type="EC" id="2.7.4.6"/>
    </reaction>
</comment>
<comment type="cofactor">
    <cofactor evidence="1">
        <name>Mg(2+)</name>
        <dbReference type="ChEBI" id="CHEBI:18420"/>
    </cofactor>
</comment>
<comment type="subunit">
    <text evidence="1">Homotetramer.</text>
</comment>
<comment type="subcellular location">
    <subcellularLocation>
        <location evidence="1">Cytoplasm</location>
    </subcellularLocation>
</comment>
<comment type="similarity">
    <text evidence="1">Belongs to the NDK family.</text>
</comment>
<feature type="chain" id="PRO_1000124938" description="Nucleoside diphosphate kinase">
    <location>
        <begin position="1"/>
        <end position="141"/>
    </location>
</feature>
<feature type="active site" description="Pros-phosphohistidine intermediate" evidence="1">
    <location>
        <position position="117"/>
    </location>
</feature>
<feature type="binding site" evidence="1">
    <location>
        <position position="11"/>
    </location>
    <ligand>
        <name>ATP</name>
        <dbReference type="ChEBI" id="CHEBI:30616"/>
    </ligand>
</feature>
<feature type="binding site" evidence="1">
    <location>
        <position position="59"/>
    </location>
    <ligand>
        <name>ATP</name>
        <dbReference type="ChEBI" id="CHEBI:30616"/>
    </ligand>
</feature>
<feature type="binding site" evidence="1">
    <location>
        <position position="87"/>
    </location>
    <ligand>
        <name>ATP</name>
        <dbReference type="ChEBI" id="CHEBI:30616"/>
    </ligand>
</feature>
<feature type="binding site" evidence="1">
    <location>
        <position position="93"/>
    </location>
    <ligand>
        <name>ATP</name>
        <dbReference type="ChEBI" id="CHEBI:30616"/>
    </ligand>
</feature>
<feature type="binding site" evidence="1">
    <location>
        <position position="104"/>
    </location>
    <ligand>
        <name>ATP</name>
        <dbReference type="ChEBI" id="CHEBI:30616"/>
    </ligand>
</feature>
<feature type="binding site" evidence="1">
    <location>
        <position position="114"/>
    </location>
    <ligand>
        <name>ATP</name>
        <dbReference type="ChEBI" id="CHEBI:30616"/>
    </ligand>
</feature>
<gene>
    <name evidence="1" type="primary">ndk</name>
    <name type="ordered locus">BceJ2315_18500</name>
    <name type="ORF">BCAL1887</name>
</gene>
<dbReference type="EC" id="2.7.4.6" evidence="1"/>
<dbReference type="EMBL" id="AM747720">
    <property type="protein sequence ID" value="CAR52187.1"/>
    <property type="molecule type" value="Genomic_DNA"/>
</dbReference>
<dbReference type="RefSeq" id="WP_006478674.1">
    <property type="nucleotide sequence ID" value="NC_011000.1"/>
</dbReference>
<dbReference type="SMR" id="B4EAX2"/>
<dbReference type="GeneID" id="93191833"/>
<dbReference type="KEGG" id="bcj:BCAL1887"/>
<dbReference type="eggNOG" id="COG0105">
    <property type="taxonomic scope" value="Bacteria"/>
</dbReference>
<dbReference type="HOGENOM" id="CLU_060216_8_1_4"/>
<dbReference type="BioCyc" id="BCEN216591:G1G1V-2079-MONOMER"/>
<dbReference type="Proteomes" id="UP000001035">
    <property type="component" value="Chromosome 1"/>
</dbReference>
<dbReference type="GO" id="GO:0005737">
    <property type="term" value="C:cytoplasm"/>
    <property type="evidence" value="ECO:0007669"/>
    <property type="project" value="UniProtKB-SubCell"/>
</dbReference>
<dbReference type="GO" id="GO:0005524">
    <property type="term" value="F:ATP binding"/>
    <property type="evidence" value="ECO:0007669"/>
    <property type="project" value="UniProtKB-UniRule"/>
</dbReference>
<dbReference type="GO" id="GO:0046872">
    <property type="term" value="F:metal ion binding"/>
    <property type="evidence" value="ECO:0007669"/>
    <property type="project" value="UniProtKB-KW"/>
</dbReference>
<dbReference type="GO" id="GO:0004550">
    <property type="term" value="F:nucleoside diphosphate kinase activity"/>
    <property type="evidence" value="ECO:0007669"/>
    <property type="project" value="UniProtKB-UniRule"/>
</dbReference>
<dbReference type="GO" id="GO:0006241">
    <property type="term" value="P:CTP biosynthetic process"/>
    <property type="evidence" value="ECO:0007669"/>
    <property type="project" value="UniProtKB-UniRule"/>
</dbReference>
<dbReference type="GO" id="GO:0006183">
    <property type="term" value="P:GTP biosynthetic process"/>
    <property type="evidence" value="ECO:0007669"/>
    <property type="project" value="UniProtKB-UniRule"/>
</dbReference>
<dbReference type="GO" id="GO:0006228">
    <property type="term" value="P:UTP biosynthetic process"/>
    <property type="evidence" value="ECO:0007669"/>
    <property type="project" value="UniProtKB-UniRule"/>
</dbReference>
<dbReference type="CDD" id="cd04413">
    <property type="entry name" value="NDPk_I"/>
    <property type="match status" value="1"/>
</dbReference>
<dbReference type="FunFam" id="3.30.70.141:FF:000001">
    <property type="entry name" value="Nucleoside diphosphate kinase"/>
    <property type="match status" value="1"/>
</dbReference>
<dbReference type="Gene3D" id="3.30.70.141">
    <property type="entry name" value="Nucleoside diphosphate kinase-like domain"/>
    <property type="match status" value="1"/>
</dbReference>
<dbReference type="HAMAP" id="MF_00451">
    <property type="entry name" value="NDP_kinase"/>
    <property type="match status" value="1"/>
</dbReference>
<dbReference type="InterPro" id="IPR034907">
    <property type="entry name" value="NDK-like_dom"/>
</dbReference>
<dbReference type="InterPro" id="IPR036850">
    <property type="entry name" value="NDK-like_dom_sf"/>
</dbReference>
<dbReference type="InterPro" id="IPR001564">
    <property type="entry name" value="Nucleoside_diP_kinase"/>
</dbReference>
<dbReference type="NCBIfam" id="NF001908">
    <property type="entry name" value="PRK00668.1"/>
    <property type="match status" value="1"/>
</dbReference>
<dbReference type="PANTHER" id="PTHR46161">
    <property type="entry name" value="NUCLEOSIDE DIPHOSPHATE KINASE"/>
    <property type="match status" value="1"/>
</dbReference>
<dbReference type="PANTHER" id="PTHR46161:SF3">
    <property type="entry name" value="NUCLEOSIDE DIPHOSPHATE KINASE DDB_G0292928-RELATED"/>
    <property type="match status" value="1"/>
</dbReference>
<dbReference type="Pfam" id="PF00334">
    <property type="entry name" value="NDK"/>
    <property type="match status" value="1"/>
</dbReference>
<dbReference type="PRINTS" id="PR01243">
    <property type="entry name" value="NUCDPKINASE"/>
</dbReference>
<dbReference type="SMART" id="SM00562">
    <property type="entry name" value="NDK"/>
    <property type="match status" value="1"/>
</dbReference>
<dbReference type="SUPFAM" id="SSF54919">
    <property type="entry name" value="Nucleoside diphosphate kinase, NDK"/>
    <property type="match status" value="1"/>
</dbReference>
<dbReference type="PROSITE" id="PS51374">
    <property type="entry name" value="NDPK_LIKE"/>
    <property type="match status" value="1"/>
</dbReference>
<sequence>MAIERTLSIIKPDAVAKNVIGQIYSRFEGAGLKIVASRMAHLSRADAEKFYAVHAARPFFKDLVDFMISGPVMIQVLEGEGAILKNRDLMGATDPKKAEKGTIRADFADSIDANAVHGSDAAETAAVEIAFFFPEMNVYSR</sequence>
<organism>
    <name type="scientific">Burkholderia cenocepacia (strain ATCC BAA-245 / DSM 16553 / LMG 16656 / NCTC 13227 / J2315 / CF5610)</name>
    <name type="common">Burkholderia cepacia (strain J2315)</name>
    <dbReference type="NCBI Taxonomy" id="216591"/>
    <lineage>
        <taxon>Bacteria</taxon>
        <taxon>Pseudomonadati</taxon>
        <taxon>Pseudomonadota</taxon>
        <taxon>Betaproteobacteria</taxon>
        <taxon>Burkholderiales</taxon>
        <taxon>Burkholderiaceae</taxon>
        <taxon>Burkholderia</taxon>
        <taxon>Burkholderia cepacia complex</taxon>
    </lineage>
</organism>